<proteinExistence type="inferred from homology"/>
<dbReference type="EMBL" id="BA000037">
    <property type="protein sequence ID" value="BAC92945.1"/>
    <property type="molecule type" value="Genomic_DNA"/>
</dbReference>
<dbReference type="RefSeq" id="WP_011078971.1">
    <property type="nucleotide sequence ID" value="NC_005139.1"/>
</dbReference>
<dbReference type="SMR" id="Q7MQ29"/>
<dbReference type="STRING" id="672.VV93_v1c01680"/>
<dbReference type="KEGG" id="vvy:VV0181"/>
<dbReference type="eggNOG" id="COG1826">
    <property type="taxonomic scope" value="Bacteria"/>
</dbReference>
<dbReference type="HOGENOM" id="CLU_086034_1_1_6"/>
<dbReference type="Proteomes" id="UP000002675">
    <property type="component" value="Chromosome I"/>
</dbReference>
<dbReference type="GO" id="GO:0033281">
    <property type="term" value="C:TAT protein transport complex"/>
    <property type="evidence" value="ECO:0007669"/>
    <property type="project" value="UniProtKB-UniRule"/>
</dbReference>
<dbReference type="GO" id="GO:0008320">
    <property type="term" value="F:protein transmembrane transporter activity"/>
    <property type="evidence" value="ECO:0007669"/>
    <property type="project" value="UniProtKB-UniRule"/>
</dbReference>
<dbReference type="GO" id="GO:0043953">
    <property type="term" value="P:protein transport by the Tat complex"/>
    <property type="evidence" value="ECO:0007669"/>
    <property type="project" value="UniProtKB-UniRule"/>
</dbReference>
<dbReference type="Gene3D" id="1.20.5.3310">
    <property type="match status" value="1"/>
</dbReference>
<dbReference type="HAMAP" id="MF_00237">
    <property type="entry name" value="TatB"/>
    <property type="match status" value="1"/>
</dbReference>
<dbReference type="InterPro" id="IPR003369">
    <property type="entry name" value="TatA/B/E"/>
</dbReference>
<dbReference type="InterPro" id="IPR018448">
    <property type="entry name" value="TatB"/>
</dbReference>
<dbReference type="NCBIfam" id="TIGR01410">
    <property type="entry name" value="tatB"/>
    <property type="match status" value="1"/>
</dbReference>
<dbReference type="PANTHER" id="PTHR33162">
    <property type="entry name" value="SEC-INDEPENDENT PROTEIN TRANSLOCASE PROTEIN TATA, CHLOROPLASTIC"/>
    <property type="match status" value="1"/>
</dbReference>
<dbReference type="PANTHER" id="PTHR33162:SF1">
    <property type="entry name" value="SEC-INDEPENDENT PROTEIN TRANSLOCASE PROTEIN TATA, CHLOROPLASTIC"/>
    <property type="match status" value="1"/>
</dbReference>
<dbReference type="Pfam" id="PF02416">
    <property type="entry name" value="TatA_B_E"/>
    <property type="match status" value="1"/>
</dbReference>
<dbReference type="PRINTS" id="PR01506">
    <property type="entry name" value="TATBPROTEIN"/>
</dbReference>
<comment type="function">
    <text evidence="1">Part of the twin-arginine translocation (Tat) system that transports large folded proteins containing a characteristic twin-arginine motif in their signal peptide across membranes. Together with TatC, TatB is part of a receptor directly interacting with Tat signal peptides. TatB may form an oligomeric binding site that transiently accommodates folded Tat precursor proteins before their translocation.</text>
</comment>
<comment type="subunit">
    <text evidence="1">The Tat system comprises two distinct complexes: a TatABC complex, containing multiple copies of TatA, TatB and TatC subunits, and a separate TatA complex, containing only TatA subunits. Substrates initially bind to the TatABC complex, which probably triggers association of the separate TatA complex to form the active translocon.</text>
</comment>
<comment type="subcellular location">
    <subcellularLocation>
        <location evidence="1">Cell inner membrane</location>
        <topology evidence="1">Single-pass membrane protein</topology>
    </subcellularLocation>
</comment>
<comment type="similarity">
    <text evidence="1">Belongs to the TatB family.</text>
</comment>
<sequence length="130" mass="14173">MFDIGFWELVLIFVVGLVVLGPERLPHAIRSVARFVSAAKSMANSVKDELAHELKVQELQENLRKAEQMGMEELSPDLKASVEQLKQAAQSVNRPYADVSAKNEATSSSSSDATHQTEATKTSAANTKSE</sequence>
<protein>
    <recommendedName>
        <fullName evidence="1">Sec-independent protein translocase protein TatB</fullName>
    </recommendedName>
</protein>
<keyword id="KW-0997">Cell inner membrane</keyword>
<keyword id="KW-1003">Cell membrane</keyword>
<keyword id="KW-0472">Membrane</keyword>
<keyword id="KW-0653">Protein transport</keyword>
<keyword id="KW-0811">Translocation</keyword>
<keyword id="KW-0812">Transmembrane</keyword>
<keyword id="KW-1133">Transmembrane helix</keyword>
<keyword id="KW-0813">Transport</keyword>
<accession>Q7MQ29</accession>
<feature type="chain" id="PRO_0000192676" description="Sec-independent protein translocase protein TatB">
    <location>
        <begin position="1"/>
        <end position="130"/>
    </location>
</feature>
<feature type="transmembrane region" description="Helical" evidence="1">
    <location>
        <begin position="1"/>
        <end position="21"/>
    </location>
</feature>
<feature type="region of interest" description="Disordered" evidence="2">
    <location>
        <begin position="85"/>
        <end position="130"/>
    </location>
</feature>
<feature type="compositionally biased region" description="Polar residues" evidence="2">
    <location>
        <begin position="112"/>
        <end position="130"/>
    </location>
</feature>
<name>TATB_VIBVY</name>
<reference key="1">
    <citation type="journal article" date="2003" name="Genome Res.">
        <title>Comparative genome analysis of Vibrio vulnificus, a marine pathogen.</title>
        <authorList>
            <person name="Chen C.-Y."/>
            <person name="Wu K.-M."/>
            <person name="Chang Y.-C."/>
            <person name="Chang C.-H."/>
            <person name="Tsai H.-C."/>
            <person name="Liao T.-L."/>
            <person name="Liu Y.-M."/>
            <person name="Chen H.-J."/>
            <person name="Shen A.B.-T."/>
            <person name="Li J.-C."/>
            <person name="Su T.-L."/>
            <person name="Shao C.-P."/>
            <person name="Lee C.-T."/>
            <person name="Hor L.-I."/>
            <person name="Tsai S.-F."/>
        </authorList>
    </citation>
    <scope>NUCLEOTIDE SEQUENCE [LARGE SCALE GENOMIC DNA]</scope>
    <source>
        <strain>YJ016</strain>
    </source>
</reference>
<gene>
    <name evidence="1" type="primary">tatB</name>
    <name type="ordered locus">VV0181</name>
</gene>
<evidence type="ECO:0000255" key="1">
    <source>
        <dbReference type="HAMAP-Rule" id="MF_00237"/>
    </source>
</evidence>
<evidence type="ECO:0000256" key="2">
    <source>
        <dbReference type="SAM" id="MobiDB-lite"/>
    </source>
</evidence>
<organism>
    <name type="scientific">Vibrio vulnificus (strain YJ016)</name>
    <dbReference type="NCBI Taxonomy" id="196600"/>
    <lineage>
        <taxon>Bacteria</taxon>
        <taxon>Pseudomonadati</taxon>
        <taxon>Pseudomonadota</taxon>
        <taxon>Gammaproteobacteria</taxon>
        <taxon>Vibrionales</taxon>
        <taxon>Vibrionaceae</taxon>
        <taxon>Vibrio</taxon>
    </lineage>
</organism>